<dbReference type="EC" id="6.3.5.-" evidence="1"/>
<dbReference type="EMBL" id="CP000248">
    <property type="protein sequence ID" value="ABD27269.1"/>
    <property type="molecule type" value="Genomic_DNA"/>
</dbReference>
<dbReference type="RefSeq" id="WP_011446473.1">
    <property type="nucleotide sequence ID" value="NC_007794.1"/>
</dbReference>
<dbReference type="SMR" id="Q2G4F4"/>
<dbReference type="STRING" id="279238.Saro_2833"/>
<dbReference type="KEGG" id="nar:Saro_2833"/>
<dbReference type="eggNOG" id="COG0721">
    <property type="taxonomic scope" value="Bacteria"/>
</dbReference>
<dbReference type="HOGENOM" id="CLU_105899_2_0_5"/>
<dbReference type="Proteomes" id="UP000009134">
    <property type="component" value="Chromosome"/>
</dbReference>
<dbReference type="GO" id="GO:0050566">
    <property type="term" value="F:asparaginyl-tRNA synthase (glutamine-hydrolyzing) activity"/>
    <property type="evidence" value="ECO:0007669"/>
    <property type="project" value="RHEA"/>
</dbReference>
<dbReference type="GO" id="GO:0005524">
    <property type="term" value="F:ATP binding"/>
    <property type="evidence" value="ECO:0007669"/>
    <property type="project" value="UniProtKB-KW"/>
</dbReference>
<dbReference type="GO" id="GO:0050567">
    <property type="term" value="F:glutaminyl-tRNA synthase (glutamine-hydrolyzing) activity"/>
    <property type="evidence" value="ECO:0007669"/>
    <property type="project" value="UniProtKB-UniRule"/>
</dbReference>
<dbReference type="GO" id="GO:0070681">
    <property type="term" value="P:glutaminyl-tRNAGln biosynthesis via transamidation"/>
    <property type="evidence" value="ECO:0007669"/>
    <property type="project" value="TreeGrafter"/>
</dbReference>
<dbReference type="GO" id="GO:0006450">
    <property type="term" value="P:regulation of translational fidelity"/>
    <property type="evidence" value="ECO:0007669"/>
    <property type="project" value="InterPro"/>
</dbReference>
<dbReference type="GO" id="GO:0006412">
    <property type="term" value="P:translation"/>
    <property type="evidence" value="ECO:0007669"/>
    <property type="project" value="UniProtKB-UniRule"/>
</dbReference>
<dbReference type="Gene3D" id="1.10.20.60">
    <property type="entry name" value="Glu-tRNAGln amidotransferase C subunit, N-terminal domain"/>
    <property type="match status" value="1"/>
</dbReference>
<dbReference type="HAMAP" id="MF_00122">
    <property type="entry name" value="GatC"/>
    <property type="match status" value="1"/>
</dbReference>
<dbReference type="InterPro" id="IPR036113">
    <property type="entry name" value="Asp/Glu-ADT_sf_sub_c"/>
</dbReference>
<dbReference type="InterPro" id="IPR003837">
    <property type="entry name" value="GatC"/>
</dbReference>
<dbReference type="NCBIfam" id="TIGR00135">
    <property type="entry name" value="gatC"/>
    <property type="match status" value="1"/>
</dbReference>
<dbReference type="PANTHER" id="PTHR15004">
    <property type="entry name" value="GLUTAMYL-TRNA(GLN) AMIDOTRANSFERASE SUBUNIT C, MITOCHONDRIAL"/>
    <property type="match status" value="1"/>
</dbReference>
<dbReference type="PANTHER" id="PTHR15004:SF0">
    <property type="entry name" value="GLUTAMYL-TRNA(GLN) AMIDOTRANSFERASE SUBUNIT C, MITOCHONDRIAL"/>
    <property type="match status" value="1"/>
</dbReference>
<dbReference type="Pfam" id="PF02686">
    <property type="entry name" value="GatC"/>
    <property type="match status" value="1"/>
</dbReference>
<dbReference type="SUPFAM" id="SSF141000">
    <property type="entry name" value="Glu-tRNAGln amidotransferase C subunit"/>
    <property type="match status" value="1"/>
</dbReference>
<name>GATC_NOVAD</name>
<proteinExistence type="inferred from homology"/>
<reference key="1">
    <citation type="submission" date="2006-01" db="EMBL/GenBank/DDBJ databases">
        <title>Complete sequence of Novosphingobium aromaticivorans DSM 12444.</title>
        <authorList>
            <consortium name="US DOE Joint Genome Institute"/>
            <person name="Copeland A."/>
            <person name="Lucas S."/>
            <person name="Lapidus A."/>
            <person name="Barry K."/>
            <person name="Detter J.C."/>
            <person name="Glavina T."/>
            <person name="Hammon N."/>
            <person name="Israni S."/>
            <person name="Pitluck S."/>
            <person name="Chain P."/>
            <person name="Malfatti S."/>
            <person name="Shin M."/>
            <person name="Vergez L."/>
            <person name="Schmutz J."/>
            <person name="Larimer F."/>
            <person name="Land M."/>
            <person name="Kyrpides N."/>
            <person name="Ivanova N."/>
            <person name="Fredrickson J."/>
            <person name="Balkwill D."/>
            <person name="Romine M.F."/>
            <person name="Richardson P."/>
        </authorList>
    </citation>
    <scope>NUCLEOTIDE SEQUENCE [LARGE SCALE GENOMIC DNA]</scope>
    <source>
        <strain>ATCC 700278 / DSM 12444 / CCUG 56034 / CIP 105152 / NBRC 16084 / F199</strain>
    </source>
</reference>
<sequence>MSVDTATVAKIASLARIKVSEAELGAMVPELNGILAWVEQLGEVDVTGIEPMTAVIPNKQRLRDDVVNADPLTGGDMRDAVLANAPAPEHGFFGVPKVIE</sequence>
<comment type="function">
    <text evidence="1">Allows the formation of correctly charged Asn-tRNA(Asn) or Gln-tRNA(Gln) through the transamidation of misacylated Asp-tRNA(Asn) or Glu-tRNA(Gln) in organisms which lack either or both of asparaginyl-tRNA or glutaminyl-tRNA synthetases. The reaction takes place in the presence of glutamine and ATP through an activated phospho-Asp-tRNA(Asn) or phospho-Glu-tRNA(Gln).</text>
</comment>
<comment type="catalytic activity">
    <reaction evidence="1">
        <text>L-glutamyl-tRNA(Gln) + L-glutamine + ATP + H2O = L-glutaminyl-tRNA(Gln) + L-glutamate + ADP + phosphate + H(+)</text>
        <dbReference type="Rhea" id="RHEA:17521"/>
        <dbReference type="Rhea" id="RHEA-COMP:9681"/>
        <dbReference type="Rhea" id="RHEA-COMP:9684"/>
        <dbReference type="ChEBI" id="CHEBI:15377"/>
        <dbReference type="ChEBI" id="CHEBI:15378"/>
        <dbReference type="ChEBI" id="CHEBI:29985"/>
        <dbReference type="ChEBI" id="CHEBI:30616"/>
        <dbReference type="ChEBI" id="CHEBI:43474"/>
        <dbReference type="ChEBI" id="CHEBI:58359"/>
        <dbReference type="ChEBI" id="CHEBI:78520"/>
        <dbReference type="ChEBI" id="CHEBI:78521"/>
        <dbReference type="ChEBI" id="CHEBI:456216"/>
    </reaction>
</comment>
<comment type="catalytic activity">
    <reaction evidence="1">
        <text>L-aspartyl-tRNA(Asn) + L-glutamine + ATP + H2O = L-asparaginyl-tRNA(Asn) + L-glutamate + ADP + phosphate + 2 H(+)</text>
        <dbReference type="Rhea" id="RHEA:14513"/>
        <dbReference type="Rhea" id="RHEA-COMP:9674"/>
        <dbReference type="Rhea" id="RHEA-COMP:9677"/>
        <dbReference type="ChEBI" id="CHEBI:15377"/>
        <dbReference type="ChEBI" id="CHEBI:15378"/>
        <dbReference type="ChEBI" id="CHEBI:29985"/>
        <dbReference type="ChEBI" id="CHEBI:30616"/>
        <dbReference type="ChEBI" id="CHEBI:43474"/>
        <dbReference type="ChEBI" id="CHEBI:58359"/>
        <dbReference type="ChEBI" id="CHEBI:78515"/>
        <dbReference type="ChEBI" id="CHEBI:78516"/>
        <dbReference type="ChEBI" id="CHEBI:456216"/>
    </reaction>
</comment>
<comment type="subunit">
    <text evidence="1">Heterotrimer of A, B and C subunits.</text>
</comment>
<comment type="similarity">
    <text evidence="1">Belongs to the GatC family.</text>
</comment>
<gene>
    <name evidence="1" type="primary">gatC</name>
    <name type="ordered locus">Saro_2833</name>
</gene>
<organism>
    <name type="scientific">Novosphingobium aromaticivorans (strain ATCC 700278 / DSM 12444 / CCUG 56034 / CIP 105152 / NBRC 16084 / F199)</name>
    <dbReference type="NCBI Taxonomy" id="279238"/>
    <lineage>
        <taxon>Bacteria</taxon>
        <taxon>Pseudomonadati</taxon>
        <taxon>Pseudomonadota</taxon>
        <taxon>Alphaproteobacteria</taxon>
        <taxon>Sphingomonadales</taxon>
        <taxon>Sphingomonadaceae</taxon>
        <taxon>Novosphingobium</taxon>
    </lineage>
</organism>
<keyword id="KW-0067">ATP-binding</keyword>
<keyword id="KW-0436">Ligase</keyword>
<keyword id="KW-0547">Nucleotide-binding</keyword>
<keyword id="KW-0648">Protein biosynthesis</keyword>
<keyword id="KW-1185">Reference proteome</keyword>
<feature type="chain" id="PRO_1000016162" description="Aspartyl/glutamyl-tRNA(Asn/Gln) amidotransferase subunit C">
    <location>
        <begin position="1"/>
        <end position="100"/>
    </location>
</feature>
<accession>Q2G4F4</accession>
<protein>
    <recommendedName>
        <fullName evidence="1">Aspartyl/glutamyl-tRNA(Asn/Gln) amidotransferase subunit C</fullName>
        <shortName evidence="1">Asp/Glu-ADT subunit C</shortName>
        <ecNumber evidence="1">6.3.5.-</ecNumber>
    </recommendedName>
</protein>
<evidence type="ECO:0000255" key="1">
    <source>
        <dbReference type="HAMAP-Rule" id="MF_00122"/>
    </source>
</evidence>